<gene>
    <name evidence="1" type="primary">bioB</name>
    <name type="ordered locus">BQ2027_MB1615</name>
</gene>
<reference key="1">
    <citation type="submission" date="1998-01" db="EMBL/GenBank/DDBJ databases">
        <title>Cloning, sequencing, and identification of Mycobacterium bovis BCG biotin biosynthetic genes by complementing two Mycobacterium smegmatis biotin mutants.</title>
        <authorList>
            <person name="Yu S."/>
            <person name="Jacobs W.R. Jr."/>
        </authorList>
    </citation>
    <scope>NUCLEOTIDE SEQUENCE [GENOMIC DNA]</scope>
    <source>
        <strain>BCG / Pasteur</strain>
    </source>
</reference>
<reference key="2">
    <citation type="journal article" date="2003" name="Proc. Natl. Acad. Sci. U.S.A.">
        <title>The complete genome sequence of Mycobacterium bovis.</title>
        <authorList>
            <person name="Garnier T."/>
            <person name="Eiglmeier K."/>
            <person name="Camus J.-C."/>
            <person name="Medina N."/>
            <person name="Mansoor H."/>
            <person name="Pryor M."/>
            <person name="Duthoy S."/>
            <person name="Grondin S."/>
            <person name="Lacroix C."/>
            <person name="Monsempe C."/>
            <person name="Simon S."/>
            <person name="Harris B."/>
            <person name="Atkin R."/>
            <person name="Doggett J."/>
            <person name="Mayes R."/>
            <person name="Keating L."/>
            <person name="Wheeler P.R."/>
            <person name="Parkhill J."/>
            <person name="Barrell B.G."/>
            <person name="Cole S.T."/>
            <person name="Gordon S.V."/>
            <person name="Hewinson R.G."/>
        </authorList>
    </citation>
    <scope>NUCLEOTIDE SEQUENCE [LARGE SCALE GENOMIC DNA]</scope>
    <source>
        <strain>ATCC BAA-935 / AF2122/97</strain>
    </source>
</reference>
<reference key="3">
    <citation type="journal article" date="2017" name="Genome Announc.">
        <title>Updated reference genome sequence and annotation of Mycobacterium bovis AF2122/97.</title>
        <authorList>
            <person name="Malone K.M."/>
            <person name="Farrell D."/>
            <person name="Stuber T.P."/>
            <person name="Schubert O.T."/>
            <person name="Aebersold R."/>
            <person name="Robbe-Austerman S."/>
            <person name="Gordon S.V."/>
        </authorList>
    </citation>
    <scope>NUCLEOTIDE SEQUENCE [LARGE SCALE GENOMIC DNA]</scope>
    <scope>GENOME REANNOTATION</scope>
    <source>
        <strain>ATCC BAA-935 / AF2122/97</strain>
    </source>
</reference>
<protein>
    <recommendedName>
        <fullName evidence="1">Biotin synthase</fullName>
        <ecNumber evidence="1">2.8.1.6</ecNumber>
    </recommendedName>
</protein>
<feature type="chain" id="PRO_0000185558" description="Biotin synthase">
    <location>
        <begin position="1"/>
        <end position="349"/>
    </location>
</feature>
<feature type="domain" description="Radical SAM core" evidence="2">
    <location>
        <begin position="70"/>
        <end position="295"/>
    </location>
</feature>
<feature type="binding site" evidence="1">
    <location>
        <position position="85"/>
    </location>
    <ligand>
        <name>[4Fe-4S] cluster</name>
        <dbReference type="ChEBI" id="CHEBI:49883"/>
        <note>4Fe-4S-S-AdoMet</note>
    </ligand>
</feature>
<feature type="binding site" evidence="1">
    <location>
        <position position="89"/>
    </location>
    <ligand>
        <name>[4Fe-4S] cluster</name>
        <dbReference type="ChEBI" id="CHEBI:49883"/>
        <note>4Fe-4S-S-AdoMet</note>
    </ligand>
</feature>
<feature type="binding site" evidence="1">
    <location>
        <position position="92"/>
    </location>
    <ligand>
        <name>[4Fe-4S] cluster</name>
        <dbReference type="ChEBI" id="CHEBI:49883"/>
        <note>4Fe-4S-S-AdoMet</note>
    </ligand>
</feature>
<feature type="binding site" evidence="1">
    <location>
        <position position="128"/>
    </location>
    <ligand>
        <name>[2Fe-2S] cluster</name>
        <dbReference type="ChEBI" id="CHEBI:190135"/>
    </ligand>
</feature>
<feature type="binding site" evidence="1">
    <location>
        <position position="161"/>
    </location>
    <ligand>
        <name>[2Fe-2S] cluster</name>
        <dbReference type="ChEBI" id="CHEBI:190135"/>
    </ligand>
</feature>
<feature type="binding site" evidence="1">
    <location>
        <position position="220"/>
    </location>
    <ligand>
        <name>[2Fe-2S] cluster</name>
        <dbReference type="ChEBI" id="CHEBI:190135"/>
    </ligand>
</feature>
<feature type="binding site" evidence="1">
    <location>
        <position position="290"/>
    </location>
    <ligand>
        <name>[2Fe-2S] cluster</name>
        <dbReference type="ChEBI" id="CHEBI:190135"/>
    </ligand>
</feature>
<keyword id="KW-0001">2Fe-2S</keyword>
<keyword id="KW-0004">4Fe-4S</keyword>
<keyword id="KW-0093">Biotin biosynthesis</keyword>
<keyword id="KW-0408">Iron</keyword>
<keyword id="KW-0411">Iron-sulfur</keyword>
<keyword id="KW-0479">Metal-binding</keyword>
<keyword id="KW-1185">Reference proteome</keyword>
<keyword id="KW-0949">S-adenosyl-L-methionine</keyword>
<keyword id="KW-0808">Transferase</keyword>
<accession>P0A507</accession>
<accession>A0A1R3XYR9</accession>
<accession>O06601</accession>
<accession>X2BIA2</accession>
<name>BIOB_MYCBO</name>
<dbReference type="EC" id="2.8.1.6" evidence="1"/>
<dbReference type="EMBL" id="AF041819">
    <property type="protein sequence ID" value="AAB96962.1"/>
    <property type="molecule type" value="Genomic_DNA"/>
</dbReference>
<dbReference type="EMBL" id="LT708304">
    <property type="protein sequence ID" value="SIU00219.1"/>
    <property type="molecule type" value="Genomic_DNA"/>
</dbReference>
<dbReference type="RefSeq" id="NP_855268.1">
    <property type="nucleotide sequence ID" value="NC_002945.3"/>
</dbReference>
<dbReference type="RefSeq" id="WP_003898934.1">
    <property type="nucleotide sequence ID" value="NC_002945.4"/>
</dbReference>
<dbReference type="SMR" id="P0A507"/>
<dbReference type="KEGG" id="mbo:BQ2027_MB1615"/>
<dbReference type="PATRIC" id="fig|233413.5.peg.1764"/>
<dbReference type="UniPathway" id="UPA00078">
    <property type="reaction ID" value="UER00162"/>
</dbReference>
<dbReference type="Proteomes" id="UP000001419">
    <property type="component" value="Chromosome"/>
</dbReference>
<dbReference type="GO" id="GO:0051537">
    <property type="term" value="F:2 iron, 2 sulfur cluster binding"/>
    <property type="evidence" value="ECO:0007669"/>
    <property type="project" value="UniProtKB-KW"/>
</dbReference>
<dbReference type="GO" id="GO:0051539">
    <property type="term" value="F:4 iron, 4 sulfur cluster binding"/>
    <property type="evidence" value="ECO:0007669"/>
    <property type="project" value="UniProtKB-KW"/>
</dbReference>
<dbReference type="GO" id="GO:0004076">
    <property type="term" value="F:biotin synthase activity"/>
    <property type="evidence" value="ECO:0007669"/>
    <property type="project" value="UniProtKB-UniRule"/>
</dbReference>
<dbReference type="GO" id="GO:0005506">
    <property type="term" value="F:iron ion binding"/>
    <property type="evidence" value="ECO:0007669"/>
    <property type="project" value="UniProtKB-UniRule"/>
</dbReference>
<dbReference type="GO" id="GO:0009102">
    <property type="term" value="P:biotin biosynthetic process"/>
    <property type="evidence" value="ECO:0007669"/>
    <property type="project" value="UniProtKB-UniRule"/>
</dbReference>
<dbReference type="CDD" id="cd01335">
    <property type="entry name" value="Radical_SAM"/>
    <property type="match status" value="1"/>
</dbReference>
<dbReference type="FunFam" id="3.20.20.70:FF:000026">
    <property type="entry name" value="Biotin synthase"/>
    <property type="match status" value="1"/>
</dbReference>
<dbReference type="Gene3D" id="3.20.20.70">
    <property type="entry name" value="Aldolase class I"/>
    <property type="match status" value="1"/>
</dbReference>
<dbReference type="HAMAP" id="MF_01694">
    <property type="entry name" value="BioB"/>
    <property type="match status" value="1"/>
</dbReference>
<dbReference type="InterPro" id="IPR013785">
    <property type="entry name" value="Aldolase_TIM"/>
</dbReference>
<dbReference type="InterPro" id="IPR010722">
    <property type="entry name" value="BATS_dom"/>
</dbReference>
<dbReference type="InterPro" id="IPR002684">
    <property type="entry name" value="Biotin_synth/BioAB"/>
</dbReference>
<dbReference type="InterPro" id="IPR024177">
    <property type="entry name" value="Biotin_synthase"/>
</dbReference>
<dbReference type="InterPro" id="IPR006638">
    <property type="entry name" value="Elp3/MiaA/NifB-like_rSAM"/>
</dbReference>
<dbReference type="InterPro" id="IPR007197">
    <property type="entry name" value="rSAM"/>
</dbReference>
<dbReference type="NCBIfam" id="TIGR00433">
    <property type="entry name" value="bioB"/>
    <property type="match status" value="1"/>
</dbReference>
<dbReference type="PANTHER" id="PTHR22976">
    <property type="entry name" value="BIOTIN SYNTHASE"/>
    <property type="match status" value="1"/>
</dbReference>
<dbReference type="PANTHER" id="PTHR22976:SF2">
    <property type="entry name" value="BIOTIN SYNTHASE, MITOCHONDRIAL"/>
    <property type="match status" value="1"/>
</dbReference>
<dbReference type="Pfam" id="PF06968">
    <property type="entry name" value="BATS"/>
    <property type="match status" value="1"/>
</dbReference>
<dbReference type="Pfam" id="PF04055">
    <property type="entry name" value="Radical_SAM"/>
    <property type="match status" value="1"/>
</dbReference>
<dbReference type="PIRSF" id="PIRSF001619">
    <property type="entry name" value="Biotin_synth"/>
    <property type="match status" value="1"/>
</dbReference>
<dbReference type="SFLD" id="SFLDG01060">
    <property type="entry name" value="BATS_domain_containing"/>
    <property type="match status" value="1"/>
</dbReference>
<dbReference type="SFLD" id="SFLDG01278">
    <property type="entry name" value="biotin_synthase_like"/>
    <property type="match status" value="1"/>
</dbReference>
<dbReference type="SMART" id="SM00876">
    <property type="entry name" value="BATS"/>
    <property type="match status" value="1"/>
</dbReference>
<dbReference type="SMART" id="SM00729">
    <property type="entry name" value="Elp3"/>
    <property type="match status" value="1"/>
</dbReference>
<dbReference type="SUPFAM" id="SSF102114">
    <property type="entry name" value="Radical SAM enzymes"/>
    <property type="match status" value="1"/>
</dbReference>
<dbReference type="PROSITE" id="PS51918">
    <property type="entry name" value="RADICAL_SAM"/>
    <property type="match status" value="1"/>
</dbReference>
<comment type="function">
    <text evidence="1">Catalyzes the conversion of dethiobiotin (DTB) to biotin by the insertion of a sulfur atom into dethiobiotin via a radical-based mechanism.</text>
</comment>
<comment type="catalytic activity">
    <reaction evidence="1">
        <text>(4R,5S)-dethiobiotin + (sulfur carrier)-SH + 2 reduced [2Fe-2S]-[ferredoxin] + 2 S-adenosyl-L-methionine = (sulfur carrier)-H + biotin + 2 5'-deoxyadenosine + 2 L-methionine + 2 oxidized [2Fe-2S]-[ferredoxin]</text>
        <dbReference type="Rhea" id="RHEA:22060"/>
        <dbReference type="Rhea" id="RHEA-COMP:10000"/>
        <dbReference type="Rhea" id="RHEA-COMP:10001"/>
        <dbReference type="Rhea" id="RHEA-COMP:14737"/>
        <dbReference type="Rhea" id="RHEA-COMP:14739"/>
        <dbReference type="ChEBI" id="CHEBI:17319"/>
        <dbReference type="ChEBI" id="CHEBI:29917"/>
        <dbReference type="ChEBI" id="CHEBI:33737"/>
        <dbReference type="ChEBI" id="CHEBI:33738"/>
        <dbReference type="ChEBI" id="CHEBI:57586"/>
        <dbReference type="ChEBI" id="CHEBI:57844"/>
        <dbReference type="ChEBI" id="CHEBI:59789"/>
        <dbReference type="ChEBI" id="CHEBI:64428"/>
        <dbReference type="ChEBI" id="CHEBI:149473"/>
        <dbReference type="EC" id="2.8.1.6"/>
    </reaction>
</comment>
<comment type="cofactor">
    <cofactor evidence="1">
        <name>[4Fe-4S] cluster</name>
        <dbReference type="ChEBI" id="CHEBI:49883"/>
    </cofactor>
    <text evidence="1">Binds 1 [4Fe-4S] cluster. The cluster is coordinated with 3 cysteines and an exchangeable S-adenosyl-L-methionine.</text>
</comment>
<comment type="cofactor">
    <cofactor evidence="1">
        <name>[2Fe-2S] cluster</name>
        <dbReference type="ChEBI" id="CHEBI:190135"/>
    </cofactor>
    <text evidence="1">Binds 1 [2Fe-2S] cluster. The cluster is coordinated with 3 cysteines and 1 arginine.</text>
</comment>
<comment type="pathway">
    <text evidence="1">Cofactor biosynthesis; biotin biosynthesis; biotin from 7,8-diaminononanoate: step 2/2.</text>
</comment>
<comment type="subunit">
    <text evidence="1">Homodimer.</text>
</comment>
<comment type="similarity">
    <text evidence="1">Belongs to the radical SAM superfamily. Biotin synthase family.</text>
</comment>
<evidence type="ECO:0000255" key="1">
    <source>
        <dbReference type="HAMAP-Rule" id="MF_01694"/>
    </source>
</evidence>
<evidence type="ECO:0000255" key="2">
    <source>
        <dbReference type="PROSITE-ProRule" id="PRU01266"/>
    </source>
</evidence>
<organism>
    <name type="scientific">Mycobacterium bovis (strain ATCC BAA-935 / AF2122/97)</name>
    <dbReference type="NCBI Taxonomy" id="233413"/>
    <lineage>
        <taxon>Bacteria</taxon>
        <taxon>Bacillati</taxon>
        <taxon>Actinomycetota</taxon>
        <taxon>Actinomycetes</taxon>
        <taxon>Mycobacteriales</taxon>
        <taxon>Mycobacteriaceae</taxon>
        <taxon>Mycobacterium</taxon>
        <taxon>Mycobacterium tuberculosis complex</taxon>
    </lineage>
</organism>
<proteinExistence type="inferred from homology"/>
<sequence length="349" mass="37550">MTQAATRPTNDAGQDGGNNSDILVVARQQVLQRGEGLNQDQVLAVLQLPDDRLEELLALAHEVRMRWCGPEVEVEGIISLKTGGCPEDCHFCSQSGLFASPVRSAWLDIPSLVEAAKQTAKSGATEFCIVAAVRGPDERLMAQVAAGIEAIRNEVEINIACSLGMLTAEQVDQLAARGVHRYNHNLETARSFFANVVTTHTWEERWQTLSMVRDAGMEVCCGGILGMGETLQQRAEFAAELAELGPDEVPLNFLNPRPGTPFADLEVMPVGDALKAVAAFRLALPRTMLRFAGGREITLGDLGAKRGILGGINAVIVGNYLTTLGRPAEADLELLDELQMPLKALNASL</sequence>